<organism>
    <name type="scientific">Arabidopsis thaliana</name>
    <name type="common">Mouse-ear cress</name>
    <dbReference type="NCBI Taxonomy" id="3702"/>
    <lineage>
        <taxon>Eukaryota</taxon>
        <taxon>Viridiplantae</taxon>
        <taxon>Streptophyta</taxon>
        <taxon>Embryophyta</taxon>
        <taxon>Tracheophyta</taxon>
        <taxon>Spermatophyta</taxon>
        <taxon>Magnoliopsida</taxon>
        <taxon>eudicotyledons</taxon>
        <taxon>Gunneridae</taxon>
        <taxon>Pentapetalae</taxon>
        <taxon>rosids</taxon>
        <taxon>malvids</taxon>
        <taxon>Brassicales</taxon>
        <taxon>Brassicaceae</taxon>
        <taxon>Camelineae</taxon>
        <taxon>Arabidopsis</taxon>
    </lineage>
</organism>
<dbReference type="EMBL" id="AF308451">
    <property type="protein sequence ID" value="AAG40858.1"/>
    <property type="molecule type" value="mRNA"/>
</dbReference>
<dbReference type="EMBL" id="AC011000">
    <property type="protein sequence ID" value="AAF75812.1"/>
    <property type="status" value="ALT_INIT"/>
    <property type="molecule type" value="Genomic_DNA"/>
</dbReference>
<dbReference type="EMBL" id="CP002684">
    <property type="protein sequence ID" value="AEE34034.1"/>
    <property type="molecule type" value="Genomic_DNA"/>
</dbReference>
<dbReference type="EMBL" id="AK118326">
    <property type="protein sequence ID" value="BAC42940.1"/>
    <property type="status" value="ALT_INIT"/>
    <property type="molecule type" value="mRNA"/>
</dbReference>
<dbReference type="EMBL" id="BT026059">
    <property type="protein sequence ID" value="ABG48415.1"/>
    <property type="molecule type" value="mRNA"/>
</dbReference>
<dbReference type="EMBL" id="AY084398">
    <property type="protein sequence ID" value="AAM67281.1"/>
    <property type="status" value="ALT_INIT"/>
    <property type="molecule type" value="mRNA"/>
</dbReference>
<dbReference type="PIR" id="A96655">
    <property type="entry name" value="A96655"/>
</dbReference>
<dbReference type="RefSeq" id="NP_564805.1">
    <property type="nucleotide sequence ID" value="NM_104977.3"/>
</dbReference>
<dbReference type="SMR" id="Q9FPQ8"/>
<dbReference type="BioGRID" id="27823">
    <property type="interactions" value="25"/>
</dbReference>
<dbReference type="FunCoup" id="Q9FPQ8">
    <property type="interactions" value="227"/>
</dbReference>
<dbReference type="IntAct" id="Q9FPQ8">
    <property type="interactions" value="26"/>
</dbReference>
<dbReference type="STRING" id="3702.Q9FPQ8"/>
<dbReference type="PaxDb" id="3702-AT1G62990.1"/>
<dbReference type="ProteomicsDB" id="238189"/>
<dbReference type="EnsemblPlants" id="AT1G62990.1">
    <property type="protein sequence ID" value="AT1G62990.1"/>
    <property type="gene ID" value="AT1G62990"/>
</dbReference>
<dbReference type="GeneID" id="842602"/>
<dbReference type="Gramene" id="AT1G62990.1">
    <property type="protein sequence ID" value="AT1G62990.1"/>
    <property type="gene ID" value="AT1G62990"/>
</dbReference>
<dbReference type="KEGG" id="ath:AT1G62990"/>
<dbReference type="Araport" id="AT1G62990"/>
<dbReference type="TAIR" id="AT1G62990">
    <property type="gene designation" value="KNAT7"/>
</dbReference>
<dbReference type="eggNOG" id="KOG0773">
    <property type="taxonomic scope" value="Eukaryota"/>
</dbReference>
<dbReference type="HOGENOM" id="CLU_040111_1_0_1"/>
<dbReference type="InParanoid" id="Q9FPQ8"/>
<dbReference type="OMA" id="LAQYIMV"/>
<dbReference type="PhylomeDB" id="Q9FPQ8"/>
<dbReference type="PRO" id="PR:Q9FPQ8"/>
<dbReference type="Proteomes" id="UP000006548">
    <property type="component" value="Chromosome 1"/>
</dbReference>
<dbReference type="ExpressionAtlas" id="Q9FPQ8">
    <property type="expression patterns" value="baseline and differential"/>
</dbReference>
<dbReference type="GO" id="GO:0005634">
    <property type="term" value="C:nucleus"/>
    <property type="evidence" value="ECO:0000314"/>
    <property type="project" value="TAIR"/>
</dbReference>
<dbReference type="GO" id="GO:0003700">
    <property type="term" value="F:DNA-binding transcription factor activity"/>
    <property type="evidence" value="ECO:0000250"/>
    <property type="project" value="TAIR"/>
</dbReference>
<dbReference type="GO" id="GO:0000976">
    <property type="term" value="F:transcription cis-regulatory region binding"/>
    <property type="evidence" value="ECO:0000353"/>
    <property type="project" value="TAIR"/>
</dbReference>
<dbReference type="GO" id="GO:0010192">
    <property type="term" value="P:mucilage biosynthetic process"/>
    <property type="evidence" value="ECO:0000315"/>
    <property type="project" value="TAIR"/>
</dbReference>
<dbReference type="GO" id="GO:0080001">
    <property type="term" value="P:mucilage extrusion from seed coat"/>
    <property type="evidence" value="ECO:0000315"/>
    <property type="project" value="TAIR"/>
</dbReference>
<dbReference type="GO" id="GO:0045892">
    <property type="term" value="P:negative regulation of DNA-templated transcription"/>
    <property type="evidence" value="ECO:0000314"/>
    <property type="project" value="TAIR"/>
</dbReference>
<dbReference type="GO" id="GO:2000652">
    <property type="term" value="P:regulation of secondary cell wall biogenesis"/>
    <property type="evidence" value="ECO:0000315"/>
    <property type="project" value="TAIR"/>
</dbReference>
<dbReference type="GO" id="GO:0010214">
    <property type="term" value="P:seed coat development"/>
    <property type="evidence" value="ECO:0000315"/>
    <property type="project" value="TAIR"/>
</dbReference>
<dbReference type="GO" id="GO:0080112">
    <property type="term" value="P:seed growth"/>
    <property type="evidence" value="ECO:0000315"/>
    <property type="project" value="TAIR"/>
</dbReference>
<dbReference type="GO" id="GO:0010089">
    <property type="term" value="P:xylem development"/>
    <property type="evidence" value="ECO:0000315"/>
    <property type="project" value="TAIR"/>
</dbReference>
<dbReference type="CDD" id="cd00086">
    <property type="entry name" value="homeodomain"/>
    <property type="match status" value="1"/>
</dbReference>
<dbReference type="FunFam" id="1.10.10.60:FF:000143">
    <property type="entry name" value="homeobox protein knotted-1-like 3 isoform X1"/>
    <property type="match status" value="1"/>
</dbReference>
<dbReference type="Gene3D" id="1.10.10.60">
    <property type="entry name" value="Homeodomain-like"/>
    <property type="match status" value="1"/>
</dbReference>
<dbReference type="InterPro" id="IPR005539">
    <property type="entry name" value="ELK_dom"/>
</dbReference>
<dbReference type="InterPro" id="IPR001356">
    <property type="entry name" value="HD"/>
</dbReference>
<dbReference type="InterPro" id="IPR009057">
    <property type="entry name" value="Homeodomain-like_sf"/>
</dbReference>
<dbReference type="InterPro" id="IPR008422">
    <property type="entry name" value="KN_HD"/>
</dbReference>
<dbReference type="InterPro" id="IPR005540">
    <property type="entry name" value="KNOX1"/>
</dbReference>
<dbReference type="InterPro" id="IPR005541">
    <property type="entry name" value="KNOX2"/>
</dbReference>
<dbReference type="InterPro" id="IPR050224">
    <property type="entry name" value="TALE_homeobox"/>
</dbReference>
<dbReference type="PANTHER" id="PTHR11850">
    <property type="entry name" value="HOMEOBOX PROTEIN TRANSCRIPTION FACTORS"/>
    <property type="match status" value="1"/>
</dbReference>
<dbReference type="Pfam" id="PF05920">
    <property type="entry name" value="Homeobox_KN"/>
    <property type="match status" value="1"/>
</dbReference>
<dbReference type="Pfam" id="PF03790">
    <property type="entry name" value="KNOX1"/>
    <property type="match status" value="1"/>
</dbReference>
<dbReference type="Pfam" id="PF03791">
    <property type="entry name" value="KNOX2"/>
    <property type="match status" value="1"/>
</dbReference>
<dbReference type="SMART" id="SM00389">
    <property type="entry name" value="HOX"/>
    <property type="match status" value="1"/>
</dbReference>
<dbReference type="SMART" id="SM01255">
    <property type="entry name" value="KNOX1"/>
    <property type="match status" value="1"/>
</dbReference>
<dbReference type="SMART" id="SM01256">
    <property type="entry name" value="KNOX2"/>
    <property type="match status" value="1"/>
</dbReference>
<dbReference type="SUPFAM" id="SSF46689">
    <property type="entry name" value="Homeodomain-like"/>
    <property type="match status" value="1"/>
</dbReference>
<dbReference type="PROSITE" id="PS51213">
    <property type="entry name" value="ELK"/>
    <property type="match status" value="1"/>
</dbReference>
<dbReference type="PROSITE" id="PS00027">
    <property type="entry name" value="HOMEOBOX_1"/>
    <property type="match status" value="1"/>
</dbReference>
<dbReference type="PROSITE" id="PS50071">
    <property type="entry name" value="HOMEOBOX_2"/>
    <property type="match status" value="1"/>
</dbReference>
<sequence>MQEAALGMMGATVGGDGDTAVVAEQNRQLKGEIATHPMYEQLLAAHVACLRVATPIDQLPIIEAQLSQSHHLLRSYASTAVGYHHDRHELDNFLAQYVMVLCSFKEQLQQHVRVHAVEAVMACREIENNLHSLTGATLGEGSGATMSEDEDDLPMDFSSDNSGVDFSGGHDMTGFGPLLPTESERSLMERVRQELKLELKQGFKSRIEDVREEIMRKRRAGKLPGDTTTVLKNWWQQHCKWPYPTEDDKAKLVEETGLQLKQINNWFINQRKRNWHNNSHSLTSLKSKRKH</sequence>
<reference key="1">
    <citation type="journal article" date="2001" name="Plant Cell">
        <title>The Arabidopsis BELL1 and KNOX TALE homeodomain proteins interact through a domain conserved between plants and animals.</title>
        <authorList>
            <person name="Bellaoui M."/>
            <person name="Pidkowich M.S."/>
            <person name="Samach A."/>
            <person name="Kushalappa K."/>
            <person name="Kohalmi S.E."/>
            <person name="Modrusan Z."/>
            <person name="Crosby W.L."/>
            <person name="Haughn G.W."/>
        </authorList>
    </citation>
    <scope>NUCLEOTIDE SEQUENCE [MRNA]</scope>
    <source>
        <strain>cv. Columbia</strain>
    </source>
</reference>
<reference key="2">
    <citation type="journal article" date="2000" name="Nature">
        <title>Sequence and analysis of chromosome 1 of the plant Arabidopsis thaliana.</title>
        <authorList>
            <person name="Theologis A."/>
            <person name="Ecker J.R."/>
            <person name="Palm C.J."/>
            <person name="Federspiel N.A."/>
            <person name="Kaul S."/>
            <person name="White O."/>
            <person name="Alonso J."/>
            <person name="Altafi H."/>
            <person name="Araujo R."/>
            <person name="Bowman C.L."/>
            <person name="Brooks S.Y."/>
            <person name="Buehler E."/>
            <person name="Chan A."/>
            <person name="Chao Q."/>
            <person name="Chen H."/>
            <person name="Cheuk R.F."/>
            <person name="Chin C.W."/>
            <person name="Chung M.K."/>
            <person name="Conn L."/>
            <person name="Conway A.B."/>
            <person name="Conway A.R."/>
            <person name="Creasy T.H."/>
            <person name="Dewar K."/>
            <person name="Dunn P."/>
            <person name="Etgu P."/>
            <person name="Feldblyum T.V."/>
            <person name="Feng J.-D."/>
            <person name="Fong B."/>
            <person name="Fujii C.Y."/>
            <person name="Gill J.E."/>
            <person name="Goldsmith A.D."/>
            <person name="Haas B."/>
            <person name="Hansen N.F."/>
            <person name="Hughes B."/>
            <person name="Huizar L."/>
            <person name="Hunter J.L."/>
            <person name="Jenkins J."/>
            <person name="Johnson-Hopson C."/>
            <person name="Khan S."/>
            <person name="Khaykin E."/>
            <person name="Kim C.J."/>
            <person name="Koo H.L."/>
            <person name="Kremenetskaia I."/>
            <person name="Kurtz D.B."/>
            <person name="Kwan A."/>
            <person name="Lam B."/>
            <person name="Langin-Hooper S."/>
            <person name="Lee A."/>
            <person name="Lee J.M."/>
            <person name="Lenz C.A."/>
            <person name="Li J.H."/>
            <person name="Li Y.-P."/>
            <person name="Lin X."/>
            <person name="Liu S.X."/>
            <person name="Liu Z.A."/>
            <person name="Luros J.S."/>
            <person name="Maiti R."/>
            <person name="Marziali A."/>
            <person name="Militscher J."/>
            <person name="Miranda M."/>
            <person name="Nguyen M."/>
            <person name="Nierman W.C."/>
            <person name="Osborne B.I."/>
            <person name="Pai G."/>
            <person name="Peterson J."/>
            <person name="Pham P.K."/>
            <person name="Rizzo M."/>
            <person name="Rooney T."/>
            <person name="Rowley D."/>
            <person name="Sakano H."/>
            <person name="Salzberg S.L."/>
            <person name="Schwartz J.R."/>
            <person name="Shinn P."/>
            <person name="Southwick A.M."/>
            <person name="Sun H."/>
            <person name="Tallon L.J."/>
            <person name="Tambunga G."/>
            <person name="Toriumi M.J."/>
            <person name="Town C.D."/>
            <person name="Utterback T."/>
            <person name="Van Aken S."/>
            <person name="Vaysberg M."/>
            <person name="Vysotskaia V.S."/>
            <person name="Walker M."/>
            <person name="Wu D."/>
            <person name="Yu G."/>
            <person name="Fraser C.M."/>
            <person name="Venter J.C."/>
            <person name="Davis R.W."/>
        </authorList>
    </citation>
    <scope>NUCLEOTIDE SEQUENCE [LARGE SCALE GENOMIC DNA]</scope>
    <source>
        <strain>cv. Columbia</strain>
    </source>
</reference>
<reference key="3">
    <citation type="journal article" date="2017" name="Plant J.">
        <title>Araport11: a complete reannotation of the Arabidopsis thaliana reference genome.</title>
        <authorList>
            <person name="Cheng C.Y."/>
            <person name="Krishnakumar V."/>
            <person name="Chan A.P."/>
            <person name="Thibaud-Nissen F."/>
            <person name="Schobel S."/>
            <person name="Town C.D."/>
        </authorList>
    </citation>
    <scope>GENOME REANNOTATION</scope>
    <source>
        <strain>cv. Columbia</strain>
    </source>
</reference>
<reference key="4">
    <citation type="journal article" date="2002" name="Science">
        <title>Functional annotation of a full-length Arabidopsis cDNA collection.</title>
        <authorList>
            <person name="Seki M."/>
            <person name="Narusaka M."/>
            <person name="Kamiya A."/>
            <person name="Ishida J."/>
            <person name="Satou M."/>
            <person name="Sakurai T."/>
            <person name="Nakajima M."/>
            <person name="Enju A."/>
            <person name="Akiyama K."/>
            <person name="Oono Y."/>
            <person name="Muramatsu M."/>
            <person name="Hayashizaki Y."/>
            <person name="Kawai J."/>
            <person name="Carninci P."/>
            <person name="Itoh M."/>
            <person name="Ishii Y."/>
            <person name="Arakawa T."/>
            <person name="Shibata K."/>
            <person name="Shinagawa A."/>
            <person name="Shinozaki K."/>
        </authorList>
    </citation>
    <scope>NUCLEOTIDE SEQUENCE [LARGE SCALE MRNA]</scope>
    <source>
        <strain>cv. Columbia</strain>
    </source>
</reference>
<reference key="5">
    <citation type="submission" date="2006-07" db="EMBL/GenBank/DDBJ databases">
        <title>Arabidopsis ORF clones.</title>
        <authorList>
            <person name="Quinitio C."/>
            <person name="Chen H."/>
            <person name="Kim C.J."/>
            <person name="Shinn P."/>
            <person name="Ecker J.R."/>
        </authorList>
    </citation>
    <scope>NUCLEOTIDE SEQUENCE [LARGE SCALE MRNA]</scope>
    <source>
        <strain>cv. Columbia</strain>
    </source>
</reference>
<reference key="6">
    <citation type="submission" date="2002-03" db="EMBL/GenBank/DDBJ databases">
        <title>Full-length cDNA from Arabidopsis thaliana.</title>
        <authorList>
            <person name="Brover V.V."/>
            <person name="Troukhan M.E."/>
            <person name="Alexandrov N.A."/>
            <person name="Lu Y.-P."/>
            <person name="Flavell R.B."/>
            <person name="Feldmann K.A."/>
        </authorList>
    </citation>
    <scope>NUCLEOTIDE SEQUENCE [LARGE SCALE MRNA]</scope>
</reference>
<reference key="7">
    <citation type="journal article" date="2005" name="Plant Cell">
        <title>Identification of novel genes in Arabidopsis involved in secondary cell wall formation using expression profiling and reverse genetics.</title>
        <authorList>
            <person name="Brown D.M."/>
            <person name="Zeef L.A.H."/>
            <person name="Ellis J."/>
            <person name="Goodacre R."/>
            <person name="Turner S.R."/>
        </authorList>
    </citation>
    <scope>FUNCTION</scope>
</reference>
<reference key="8">
    <citation type="journal article" date="2005" name="Proc. Natl. Acad. Sci. U.S.A.">
        <title>A central role of Arabidopsis thaliana ovate family proteins in networking and subcellular localization of 3-aa loop extension homeodomain proteins.</title>
        <authorList>
            <person name="Hackbusch J."/>
            <person name="Richter K."/>
            <person name="Muller J."/>
            <person name="Salamini F."/>
            <person name="Uhrig J.F."/>
        </authorList>
    </citation>
    <scope>INTERACTION WITH OFP1; OFP2; OFP3; OFP4 AND OFP6</scope>
</reference>
<proteinExistence type="evidence at protein level"/>
<protein>
    <recommendedName>
        <fullName>Homeobox protein knotted-1-like 7</fullName>
    </recommendedName>
    <alternativeName>
        <fullName>Protein IRREGULAR XYLEM 11</fullName>
    </alternativeName>
    <alternativeName>
        <fullName>Protein KNAT7</fullName>
    </alternativeName>
</protein>
<name>KNAT7_ARATH</name>
<accession>Q9FPQ8</accession>
<accession>Q8GXB5</accession>
<accession>Q8LG94</accession>
<accession>Q9LQ05</accession>
<gene>
    <name type="primary">KNAT7</name>
    <name type="synonym">IRX11</name>
    <name type="ordered locus">At1g62990</name>
    <name type="ORF">F16P17.16</name>
</gene>
<feature type="chain" id="PRO_0000314775" description="Homeobox protein knotted-1-like 7">
    <location>
        <begin position="1"/>
        <end position="291"/>
    </location>
</feature>
<feature type="domain" description="ELK" evidence="3">
    <location>
        <begin position="194"/>
        <end position="214"/>
    </location>
</feature>
<feature type="DNA-binding region" description="Homeobox; TALE-type" evidence="2">
    <location>
        <begin position="215"/>
        <end position="278"/>
    </location>
</feature>
<feature type="sequence conflict" description="In Ref. 4; BAC42940." evidence="6" ref="4">
    <original>M</original>
    <variation>L</variation>
    <location>
        <position position="1"/>
    </location>
</feature>
<feature type="sequence conflict" description="In Ref. 6; AAM67281." evidence="6" ref="6">
    <original>T</original>
    <variation>S</variation>
    <location>
        <position position="12"/>
    </location>
</feature>
<feature type="sequence conflict" description="In Ref. 6; AAM67281." evidence="6" ref="6">
    <original>T</original>
    <variation>A</variation>
    <location>
        <position position="19"/>
    </location>
</feature>
<feature type="sequence conflict" description="In Ref. 6; AAM67281." evidence="6" ref="6">
    <original>R</original>
    <variation>K</variation>
    <location>
        <position position="185"/>
    </location>
</feature>
<evidence type="ECO:0000250" key="1"/>
<evidence type="ECO:0000255" key="2">
    <source>
        <dbReference type="PROSITE-ProRule" id="PRU00108"/>
    </source>
</evidence>
<evidence type="ECO:0000255" key="3">
    <source>
        <dbReference type="PROSITE-ProRule" id="PRU00559"/>
    </source>
</evidence>
<evidence type="ECO:0000269" key="4">
    <source>
    </source>
</evidence>
<evidence type="ECO:0000269" key="5">
    <source>
    </source>
</evidence>
<evidence type="ECO:0000305" key="6"/>
<keyword id="KW-0238">DNA-binding</keyword>
<keyword id="KW-0371">Homeobox</keyword>
<keyword id="KW-0539">Nucleus</keyword>
<keyword id="KW-1185">Reference proteome</keyword>
<comment type="function">
    <text evidence="5">May be involved in secondary cell wall biosynthesis.</text>
</comment>
<comment type="subunit">
    <text evidence="1 4">May form heterodimeric complex with the TALE/BELL proteins (By similarity). Interacts with OFP1, OFP2, OFP3, OFP4 and OFP6.</text>
</comment>
<comment type="subcellular location">
    <subcellularLocation>
        <location evidence="6">Nucleus</location>
    </subcellularLocation>
</comment>
<comment type="similarity">
    <text evidence="3">Belongs to the TALE/KNOX homeobox family.</text>
</comment>
<comment type="sequence caution" evidence="6">
    <conflict type="erroneous initiation">
        <sequence resource="EMBL-CDS" id="AAF75812"/>
    </conflict>
    <text>Truncated N-terminus.</text>
</comment>
<comment type="sequence caution" evidence="6">
    <conflict type="erroneous initiation">
        <sequence resource="EMBL-CDS" id="AAM67281"/>
    </conflict>
    <text>Truncated N-terminus.</text>
</comment>
<comment type="sequence caution" evidence="6">
    <conflict type="erroneous initiation">
        <sequence resource="EMBL-CDS" id="BAC42940"/>
    </conflict>
    <text>Truncated N-terminus.</text>
</comment>